<gene>
    <name type="primary">HOX5</name>
    <name type="ordered locus">Os08g0416000</name>
    <name type="ordered locus">LOC_Os08g32080</name>
    <name type="ORF">OsJ_026223</name>
    <name type="ORF">P0433E10.14-1</name>
</gene>
<feature type="chain" id="PRO_0000331683" description="Homeobox-leucine zipper protein HOX5">
    <location>
        <begin position="1"/>
        <end position="349"/>
    </location>
</feature>
<feature type="DNA-binding region" description="Homeobox" evidence="1">
    <location>
        <begin position="83"/>
        <end position="142"/>
    </location>
</feature>
<feature type="region of interest" description="Leucine-zipper">
    <location>
        <begin position="141"/>
        <end position="185"/>
    </location>
</feature>
<feature type="region of interest" description="Disordered" evidence="2">
    <location>
        <begin position="181"/>
        <end position="253"/>
    </location>
</feature>
<feature type="compositionally biased region" description="Low complexity" evidence="2">
    <location>
        <begin position="188"/>
        <end position="198"/>
    </location>
</feature>
<feature type="sequence conflict" description="In Ref. 5; AK101569." evidence="5" ref="5">
    <original>G</original>
    <variation>C</variation>
    <location>
        <position position="299"/>
    </location>
</feature>
<evidence type="ECO:0000255" key="1">
    <source>
        <dbReference type="PROSITE-ProRule" id="PRU00108"/>
    </source>
</evidence>
<evidence type="ECO:0000256" key="2">
    <source>
        <dbReference type="SAM" id="MobiDB-lite"/>
    </source>
</evidence>
<evidence type="ECO:0000269" key="3">
    <source>
    </source>
</evidence>
<evidence type="ECO:0000269" key="4">
    <source>
    </source>
</evidence>
<evidence type="ECO:0000305" key="5"/>
<dbReference type="EMBL" id="AP004667">
    <property type="protein sequence ID" value="BAC98578.1"/>
    <property type="molecule type" value="Genomic_DNA"/>
</dbReference>
<dbReference type="EMBL" id="AP008214">
    <property type="protein sequence ID" value="BAF23721.1"/>
    <property type="molecule type" value="Genomic_DNA"/>
</dbReference>
<dbReference type="EMBL" id="AP014964">
    <property type="protein sequence ID" value="BAT05434.1"/>
    <property type="molecule type" value="Genomic_DNA"/>
</dbReference>
<dbReference type="EMBL" id="CM000145">
    <property type="protein sequence ID" value="EAZ42740.1"/>
    <property type="molecule type" value="Genomic_DNA"/>
</dbReference>
<dbReference type="EMBL" id="AK101569">
    <property type="status" value="NOT_ANNOTATED_CDS"/>
    <property type="molecule type" value="mRNA"/>
</dbReference>
<dbReference type="RefSeq" id="XP_015650258.1">
    <property type="nucleotide sequence ID" value="XM_015794772.1"/>
</dbReference>
<dbReference type="SMR" id="Q6ZA74"/>
<dbReference type="FunCoup" id="Q6ZA74">
    <property type="interactions" value="715"/>
</dbReference>
<dbReference type="STRING" id="39947.Q6ZA74"/>
<dbReference type="PaxDb" id="39947-Q6ZA74"/>
<dbReference type="EnsemblPlants" id="Os08t0416000-01">
    <property type="protein sequence ID" value="Os08t0416000-01"/>
    <property type="gene ID" value="Os08g0416000"/>
</dbReference>
<dbReference type="Gramene" id="Os08t0416000-01">
    <property type="protein sequence ID" value="Os08t0416000-01"/>
    <property type="gene ID" value="Os08g0416000"/>
</dbReference>
<dbReference type="KEGG" id="dosa:Os08g0416000"/>
<dbReference type="eggNOG" id="KOG0483">
    <property type="taxonomic scope" value="Eukaryota"/>
</dbReference>
<dbReference type="HOGENOM" id="CLU_060842_2_0_1"/>
<dbReference type="InParanoid" id="Q6ZA74"/>
<dbReference type="OMA" id="QPDEHTE"/>
<dbReference type="OrthoDB" id="6159439at2759"/>
<dbReference type="Proteomes" id="UP000000763">
    <property type="component" value="Chromosome 8"/>
</dbReference>
<dbReference type="Proteomes" id="UP000007752">
    <property type="component" value="Chromosome 8"/>
</dbReference>
<dbReference type="Proteomes" id="UP000059680">
    <property type="component" value="Chromosome 8"/>
</dbReference>
<dbReference type="ExpressionAtlas" id="Q6ZA74">
    <property type="expression patterns" value="baseline and differential"/>
</dbReference>
<dbReference type="GO" id="GO:0005634">
    <property type="term" value="C:nucleus"/>
    <property type="evidence" value="ECO:0000318"/>
    <property type="project" value="GO_Central"/>
</dbReference>
<dbReference type="GO" id="GO:0000981">
    <property type="term" value="F:DNA-binding transcription factor activity, RNA polymerase II-specific"/>
    <property type="evidence" value="ECO:0007669"/>
    <property type="project" value="InterPro"/>
</dbReference>
<dbReference type="GO" id="GO:0043565">
    <property type="term" value="F:sequence-specific DNA binding"/>
    <property type="evidence" value="ECO:0000318"/>
    <property type="project" value="GO_Central"/>
</dbReference>
<dbReference type="GO" id="GO:0045893">
    <property type="term" value="P:positive regulation of DNA-templated transcription"/>
    <property type="evidence" value="ECO:0000318"/>
    <property type="project" value="GO_Central"/>
</dbReference>
<dbReference type="CDD" id="cd00086">
    <property type="entry name" value="homeodomain"/>
    <property type="match status" value="1"/>
</dbReference>
<dbReference type="FunFam" id="1.10.10.60:FF:000159">
    <property type="entry name" value="Homeobox-leucine zipper protein HAT5"/>
    <property type="match status" value="1"/>
</dbReference>
<dbReference type="Gene3D" id="1.10.10.60">
    <property type="entry name" value="Homeodomain-like"/>
    <property type="match status" value="1"/>
</dbReference>
<dbReference type="InterPro" id="IPR001356">
    <property type="entry name" value="HD"/>
</dbReference>
<dbReference type="InterPro" id="IPR045224">
    <property type="entry name" value="HDZip_class_I_plant"/>
</dbReference>
<dbReference type="InterPro" id="IPR017970">
    <property type="entry name" value="Homeobox_CS"/>
</dbReference>
<dbReference type="InterPro" id="IPR009057">
    <property type="entry name" value="Homeodomain-like_sf"/>
</dbReference>
<dbReference type="InterPro" id="IPR000047">
    <property type="entry name" value="HTH_motif"/>
</dbReference>
<dbReference type="InterPro" id="IPR003106">
    <property type="entry name" value="Leu_zip_homeo"/>
</dbReference>
<dbReference type="PANTHER" id="PTHR24326">
    <property type="entry name" value="HOMEOBOX-LEUCINE ZIPPER PROTEIN"/>
    <property type="match status" value="1"/>
</dbReference>
<dbReference type="PANTHER" id="PTHR24326:SF215">
    <property type="entry name" value="HOMEOBOX-LEUCINE ZIPPER PROTEIN HOX5"/>
    <property type="match status" value="1"/>
</dbReference>
<dbReference type="Pfam" id="PF02183">
    <property type="entry name" value="HALZ"/>
    <property type="match status" value="1"/>
</dbReference>
<dbReference type="Pfam" id="PF00046">
    <property type="entry name" value="Homeodomain"/>
    <property type="match status" value="1"/>
</dbReference>
<dbReference type="PRINTS" id="PR00031">
    <property type="entry name" value="HTHREPRESSR"/>
</dbReference>
<dbReference type="SMART" id="SM00389">
    <property type="entry name" value="HOX"/>
    <property type="match status" value="1"/>
</dbReference>
<dbReference type="SUPFAM" id="SSF46689">
    <property type="entry name" value="Homeodomain-like"/>
    <property type="match status" value="1"/>
</dbReference>
<dbReference type="PROSITE" id="PS00027">
    <property type="entry name" value="HOMEOBOX_1"/>
    <property type="match status" value="1"/>
</dbReference>
<dbReference type="PROSITE" id="PS50071">
    <property type="entry name" value="HOMEOBOX_2"/>
    <property type="match status" value="1"/>
</dbReference>
<accession>Q6ZA74</accession>
<accession>A0A0N7KPV0</accession>
<sequence length="349" mass="37387">MDPGRVVFDSGVARRACPGGAQMLLFGGGGSANSGGFFRGVPAAVLGMDESRSSSSAAGAGAKRPFFTTHEELLEEEYYDEQAPEKKRRLTAEQVQMLERSFEEENKLEPERKTELARRLGMAPRQVAVWFQNRRARWKTKQLEHDFDRLKAAYDALAADHHALLSDNDRLRAQVISLTEKLQDKETSPSSATITTAAQEVDQPDEHTEAASTTGFATVDGALAAPPPGHQQPPHKDDLVSSGGTNDDGDGGAAVVVFDVTEGANDRLSCESAYFADAAEAYERDCAGHYALSSEEEDGGAVSDEGCSFDLPDAAAAAAAMFGAAGVVHHDAADDEEAQLGSWTAWFWS</sequence>
<keyword id="KW-0010">Activator</keyword>
<keyword id="KW-0238">DNA-binding</keyword>
<keyword id="KW-0371">Homeobox</keyword>
<keyword id="KW-0539">Nucleus</keyword>
<keyword id="KW-1185">Reference proteome</keyword>
<keyword id="KW-0804">Transcription</keyword>
<keyword id="KW-0805">Transcription regulation</keyword>
<proteinExistence type="evidence at protein level"/>
<comment type="function">
    <text evidence="3">Probable transcription activator that binds to the DNA sequence 5'-CAAT[AT]ATTG-3'.</text>
</comment>
<comment type="subunit">
    <text evidence="3 5">Homodimer (Probable). May form a heterodimer with HOX4.</text>
</comment>
<comment type="subcellular location">
    <subcellularLocation>
        <location evidence="5">Nucleus</location>
    </subcellularLocation>
</comment>
<comment type="tissue specificity">
    <text evidence="3 4">Expressed in seedlings, roots, leaves, nodes, internodes, flowers and embryo.</text>
</comment>
<comment type="similarity">
    <text evidence="5">Belongs to the HD-ZIP homeobox family. Class I subfamily.</text>
</comment>
<name>HOX5_ORYSJ</name>
<organism>
    <name type="scientific">Oryza sativa subsp. japonica</name>
    <name type="common">Rice</name>
    <dbReference type="NCBI Taxonomy" id="39947"/>
    <lineage>
        <taxon>Eukaryota</taxon>
        <taxon>Viridiplantae</taxon>
        <taxon>Streptophyta</taxon>
        <taxon>Embryophyta</taxon>
        <taxon>Tracheophyta</taxon>
        <taxon>Spermatophyta</taxon>
        <taxon>Magnoliopsida</taxon>
        <taxon>Liliopsida</taxon>
        <taxon>Poales</taxon>
        <taxon>Poaceae</taxon>
        <taxon>BOP clade</taxon>
        <taxon>Oryzoideae</taxon>
        <taxon>Oryzeae</taxon>
        <taxon>Oryzinae</taxon>
        <taxon>Oryza</taxon>
        <taxon>Oryza sativa</taxon>
    </lineage>
</organism>
<protein>
    <recommendedName>
        <fullName>Homeobox-leucine zipper protein HOX5</fullName>
    </recommendedName>
    <alternativeName>
        <fullName>HD-ZIP protein HOX5</fullName>
    </alternativeName>
    <alternativeName>
        <fullName>Homeodomain transcription factor HOX5</fullName>
    </alternativeName>
    <alternativeName>
        <fullName>OsHox5</fullName>
    </alternativeName>
</protein>
<reference key="1">
    <citation type="journal article" date="2005" name="Nature">
        <title>The map-based sequence of the rice genome.</title>
        <authorList>
            <consortium name="International rice genome sequencing project (IRGSP)"/>
        </authorList>
    </citation>
    <scope>NUCLEOTIDE SEQUENCE [LARGE SCALE GENOMIC DNA]</scope>
    <source>
        <strain>cv. Nipponbare</strain>
    </source>
</reference>
<reference key="2">
    <citation type="journal article" date="2008" name="Nucleic Acids Res.">
        <title>The rice annotation project database (RAP-DB): 2008 update.</title>
        <authorList>
            <consortium name="The rice annotation project (RAP)"/>
        </authorList>
    </citation>
    <scope>GENOME REANNOTATION</scope>
    <source>
        <strain>cv. Nipponbare</strain>
    </source>
</reference>
<reference key="3">
    <citation type="journal article" date="2013" name="Rice">
        <title>Improvement of the Oryza sativa Nipponbare reference genome using next generation sequence and optical map data.</title>
        <authorList>
            <person name="Kawahara Y."/>
            <person name="de la Bastide M."/>
            <person name="Hamilton J.P."/>
            <person name="Kanamori H."/>
            <person name="McCombie W.R."/>
            <person name="Ouyang S."/>
            <person name="Schwartz D.C."/>
            <person name="Tanaka T."/>
            <person name="Wu J."/>
            <person name="Zhou S."/>
            <person name="Childs K.L."/>
            <person name="Davidson R.M."/>
            <person name="Lin H."/>
            <person name="Quesada-Ocampo L."/>
            <person name="Vaillancourt B."/>
            <person name="Sakai H."/>
            <person name="Lee S.S."/>
            <person name="Kim J."/>
            <person name="Numa H."/>
            <person name="Itoh T."/>
            <person name="Buell C.R."/>
            <person name="Matsumoto T."/>
        </authorList>
    </citation>
    <scope>GENOME REANNOTATION</scope>
    <source>
        <strain>cv. Nipponbare</strain>
    </source>
</reference>
<reference key="4">
    <citation type="journal article" date="2005" name="PLoS Biol.">
        <title>The genomes of Oryza sativa: a history of duplications.</title>
        <authorList>
            <person name="Yu J."/>
            <person name="Wang J."/>
            <person name="Lin W."/>
            <person name="Li S."/>
            <person name="Li H."/>
            <person name="Zhou J."/>
            <person name="Ni P."/>
            <person name="Dong W."/>
            <person name="Hu S."/>
            <person name="Zeng C."/>
            <person name="Zhang J."/>
            <person name="Zhang Y."/>
            <person name="Li R."/>
            <person name="Xu Z."/>
            <person name="Li S."/>
            <person name="Li X."/>
            <person name="Zheng H."/>
            <person name="Cong L."/>
            <person name="Lin L."/>
            <person name="Yin J."/>
            <person name="Geng J."/>
            <person name="Li G."/>
            <person name="Shi J."/>
            <person name="Liu J."/>
            <person name="Lv H."/>
            <person name="Li J."/>
            <person name="Wang J."/>
            <person name="Deng Y."/>
            <person name="Ran L."/>
            <person name="Shi X."/>
            <person name="Wang X."/>
            <person name="Wu Q."/>
            <person name="Li C."/>
            <person name="Ren X."/>
            <person name="Wang J."/>
            <person name="Wang X."/>
            <person name="Li D."/>
            <person name="Liu D."/>
            <person name="Zhang X."/>
            <person name="Ji Z."/>
            <person name="Zhao W."/>
            <person name="Sun Y."/>
            <person name="Zhang Z."/>
            <person name="Bao J."/>
            <person name="Han Y."/>
            <person name="Dong L."/>
            <person name="Ji J."/>
            <person name="Chen P."/>
            <person name="Wu S."/>
            <person name="Liu J."/>
            <person name="Xiao Y."/>
            <person name="Bu D."/>
            <person name="Tan J."/>
            <person name="Yang L."/>
            <person name="Ye C."/>
            <person name="Zhang J."/>
            <person name="Xu J."/>
            <person name="Zhou Y."/>
            <person name="Yu Y."/>
            <person name="Zhang B."/>
            <person name="Zhuang S."/>
            <person name="Wei H."/>
            <person name="Liu B."/>
            <person name="Lei M."/>
            <person name="Yu H."/>
            <person name="Li Y."/>
            <person name="Xu H."/>
            <person name="Wei S."/>
            <person name="He X."/>
            <person name="Fang L."/>
            <person name="Zhang Z."/>
            <person name="Zhang Y."/>
            <person name="Huang X."/>
            <person name="Su Z."/>
            <person name="Tong W."/>
            <person name="Li J."/>
            <person name="Tong Z."/>
            <person name="Li S."/>
            <person name="Ye J."/>
            <person name="Wang L."/>
            <person name="Fang L."/>
            <person name="Lei T."/>
            <person name="Chen C.-S."/>
            <person name="Chen H.-C."/>
            <person name="Xu Z."/>
            <person name="Li H."/>
            <person name="Huang H."/>
            <person name="Zhang F."/>
            <person name="Xu H."/>
            <person name="Li N."/>
            <person name="Zhao C."/>
            <person name="Li S."/>
            <person name="Dong L."/>
            <person name="Huang Y."/>
            <person name="Li L."/>
            <person name="Xi Y."/>
            <person name="Qi Q."/>
            <person name="Li W."/>
            <person name="Zhang B."/>
            <person name="Hu W."/>
            <person name="Zhang Y."/>
            <person name="Tian X."/>
            <person name="Jiao Y."/>
            <person name="Liang X."/>
            <person name="Jin J."/>
            <person name="Gao L."/>
            <person name="Zheng W."/>
            <person name="Hao B."/>
            <person name="Liu S.-M."/>
            <person name="Wang W."/>
            <person name="Yuan L."/>
            <person name="Cao M."/>
            <person name="McDermott J."/>
            <person name="Samudrala R."/>
            <person name="Wang J."/>
            <person name="Wong G.K.-S."/>
            <person name="Yang H."/>
        </authorList>
    </citation>
    <scope>NUCLEOTIDE SEQUENCE [LARGE SCALE GENOMIC DNA]</scope>
    <source>
        <strain>cv. Nipponbare</strain>
    </source>
</reference>
<reference key="5">
    <citation type="journal article" date="2003" name="Science">
        <title>Collection, mapping, and annotation of over 28,000 cDNA clones from japonica rice.</title>
        <authorList>
            <consortium name="The rice full-length cDNA consortium"/>
        </authorList>
    </citation>
    <scope>NUCLEOTIDE SEQUENCE [LARGE SCALE MRNA]</scope>
    <source>
        <strain>cv. Nipponbare</strain>
    </source>
</reference>
<reference key="6">
    <citation type="journal article" date="2000" name="Mol. Gen. Genet.">
        <title>HD-Zip proteins of families I and II from rice: interactions and functional properties.</title>
        <authorList>
            <person name="Meijer A.H."/>
            <person name="de Kam R.J."/>
            <person name="d'Erfurth I."/>
            <person name="Shen W.-B."/>
            <person name="Hoge J.H.C."/>
        </authorList>
    </citation>
    <scope>FUNCTION</scope>
    <scope>SUBUNIT</scope>
    <scope>TISSUE SPECIFICITY</scope>
</reference>
<reference key="7">
    <citation type="journal article" date="2008" name="Plant Mol. Biol.">
        <title>A genome-wide survey of HD-Zip genes in rice and analysis of drought-responsive family members.</title>
        <authorList>
            <person name="Agalou A."/>
            <person name="Purwantomo S."/>
            <person name="Oevernaes E."/>
            <person name="Johannesson H."/>
            <person name="Zhu X."/>
            <person name="Estiati A."/>
            <person name="de Kam R.J."/>
            <person name="Engstroem P."/>
            <person name="Slamet-Loedin I.H."/>
            <person name="Zhu Z."/>
            <person name="Wang M."/>
            <person name="Xiong L."/>
            <person name="Meijer A.H."/>
            <person name="Ouwerkerk P.B.F."/>
        </authorList>
    </citation>
    <scope>TISSUE SPECIFICITY</scope>
    <scope>GENE FAMILY</scope>
    <scope>NOMENCLATURE</scope>
</reference>